<protein>
    <recommendedName>
        <fullName evidence="1">Large ribosomal subunit protein bL35</fullName>
    </recommendedName>
    <alternativeName>
        <fullName evidence="3">50S ribosomal protein L35</fullName>
    </alternativeName>
</protein>
<comment type="similarity">
    <text evidence="1">Belongs to the bacterial ribosomal protein bL35 family.</text>
</comment>
<organism>
    <name type="scientific">Delftia acidovorans (strain DSM 14801 / SPH-1)</name>
    <dbReference type="NCBI Taxonomy" id="398578"/>
    <lineage>
        <taxon>Bacteria</taxon>
        <taxon>Pseudomonadati</taxon>
        <taxon>Pseudomonadota</taxon>
        <taxon>Betaproteobacteria</taxon>
        <taxon>Burkholderiales</taxon>
        <taxon>Comamonadaceae</taxon>
        <taxon>Delftia</taxon>
    </lineage>
</organism>
<evidence type="ECO:0000255" key="1">
    <source>
        <dbReference type="HAMAP-Rule" id="MF_00514"/>
    </source>
</evidence>
<evidence type="ECO:0000256" key="2">
    <source>
        <dbReference type="SAM" id="MobiDB-lite"/>
    </source>
</evidence>
<evidence type="ECO:0000305" key="3"/>
<proteinExistence type="inferred from homology"/>
<dbReference type="EMBL" id="CP000884">
    <property type="protein sequence ID" value="ABX37243.1"/>
    <property type="molecule type" value="Genomic_DNA"/>
</dbReference>
<dbReference type="RefSeq" id="WP_012206413.1">
    <property type="nucleotide sequence ID" value="NC_010002.1"/>
</dbReference>
<dbReference type="SMR" id="A9C3D2"/>
<dbReference type="STRING" id="398578.Daci_4614"/>
<dbReference type="GeneID" id="83663733"/>
<dbReference type="KEGG" id="dac:Daci_4614"/>
<dbReference type="eggNOG" id="COG0291">
    <property type="taxonomic scope" value="Bacteria"/>
</dbReference>
<dbReference type="HOGENOM" id="CLU_169643_1_0_4"/>
<dbReference type="Proteomes" id="UP000000784">
    <property type="component" value="Chromosome"/>
</dbReference>
<dbReference type="GO" id="GO:0022625">
    <property type="term" value="C:cytosolic large ribosomal subunit"/>
    <property type="evidence" value="ECO:0007669"/>
    <property type="project" value="TreeGrafter"/>
</dbReference>
<dbReference type="GO" id="GO:0003735">
    <property type="term" value="F:structural constituent of ribosome"/>
    <property type="evidence" value="ECO:0007669"/>
    <property type="project" value="InterPro"/>
</dbReference>
<dbReference type="GO" id="GO:0006412">
    <property type="term" value="P:translation"/>
    <property type="evidence" value="ECO:0007669"/>
    <property type="project" value="UniProtKB-UniRule"/>
</dbReference>
<dbReference type="FunFam" id="4.10.410.60:FF:000001">
    <property type="entry name" value="50S ribosomal protein L35"/>
    <property type="match status" value="1"/>
</dbReference>
<dbReference type="Gene3D" id="4.10.410.60">
    <property type="match status" value="1"/>
</dbReference>
<dbReference type="HAMAP" id="MF_00514">
    <property type="entry name" value="Ribosomal_bL35"/>
    <property type="match status" value="1"/>
</dbReference>
<dbReference type="InterPro" id="IPR001706">
    <property type="entry name" value="Ribosomal_bL35"/>
</dbReference>
<dbReference type="InterPro" id="IPR021137">
    <property type="entry name" value="Ribosomal_bL35-like"/>
</dbReference>
<dbReference type="InterPro" id="IPR018265">
    <property type="entry name" value="Ribosomal_bL35_CS"/>
</dbReference>
<dbReference type="InterPro" id="IPR037229">
    <property type="entry name" value="Ribosomal_bL35_sf"/>
</dbReference>
<dbReference type="NCBIfam" id="TIGR00001">
    <property type="entry name" value="rpmI_bact"/>
    <property type="match status" value="1"/>
</dbReference>
<dbReference type="PANTHER" id="PTHR33343">
    <property type="entry name" value="54S RIBOSOMAL PROTEIN BL35M"/>
    <property type="match status" value="1"/>
</dbReference>
<dbReference type="PANTHER" id="PTHR33343:SF1">
    <property type="entry name" value="LARGE RIBOSOMAL SUBUNIT PROTEIN BL35M"/>
    <property type="match status" value="1"/>
</dbReference>
<dbReference type="Pfam" id="PF01632">
    <property type="entry name" value="Ribosomal_L35p"/>
    <property type="match status" value="1"/>
</dbReference>
<dbReference type="PRINTS" id="PR00064">
    <property type="entry name" value="RIBOSOMALL35"/>
</dbReference>
<dbReference type="SUPFAM" id="SSF143034">
    <property type="entry name" value="L35p-like"/>
    <property type="match status" value="1"/>
</dbReference>
<dbReference type="PROSITE" id="PS00936">
    <property type="entry name" value="RIBOSOMAL_L35"/>
    <property type="match status" value="1"/>
</dbReference>
<sequence>MPKMKTKSSAKKRFRVRPGGTVKRGQAFKRHILTKKTTKNKRHLRGAVSVHETNMGSIAQMLPMAGL</sequence>
<accession>A9C3D2</accession>
<gene>
    <name evidence="1" type="primary">rpmI</name>
    <name type="ordered locus">Daci_4614</name>
</gene>
<name>RL35_DELAS</name>
<reference key="1">
    <citation type="submission" date="2007-11" db="EMBL/GenBank/DDBJ databases">
        <title>Complete sequence of Delftia acidovorans DSM 14801 / SPH-1.</title>
        <authorList>
            <person name="Copeland A."/>
            <person name="Lucas S."/>
            <person name="Lapidus A."/>
            <person name="Barry K."/>
            <person name="Glavina del Rio T."/>
            <person name="Dalin E."/>
            <person name="Tice H."/>
            <person name="Pitluck S."/>
            <person name="Lowry S."/>
            <person name="Clum A."/>
            <person name="Schmutz J."/>
            <person name="Larimer F."/>
            <person name="Land M."/>
            <person name="Hauser L."/>
            <person name="Kyrpides N."/>
            <person name="Kim E."/>
            <person name="Schleheck D."/>
            <person name="Richardson P."/>
        </authorList>
    </citation>
    <scope>NUCLEOTIDE SEQUENCE [LARGE SCALE GENOMIC DNA]</scope>
    <source>
        <strain>DSM 14801 / SPH-1</strain>
    </source>
</reference>
<keyword id="KW-1185">Reference proteome</keyword>
<keyword id="KW-0687">Ribonucleoprotein</keyword>
<keyword id="KW-0689">Ribosomal protein</keyword>
<feature type="chain" id="PRO_1000127336" description="Large ribosomal subunit protein bL35">
    <location>
        <begin position="1"/>
        <end position="67"/>
    </location>
</feature>
<feature type="region of interest" description="Disordered" evidence="2">
    <location>
        <begin position="1"/>
        <end position="24"/>
    </location>
</feature>
<feature type="compositionally biased region" description="Basic residues" evidence="2">
    <location>
        <begin position="1"/>
        <end position="16"/>
    </location>
</feature>